<evidence type="ECO:0000255" key="1"/>
<evidence type="ECO:0000256" key="2">
    <source>
        <dbReference type="SAM" id="MobiDB-lite"/>
    </source>
</evidence>
<evidence type="ECO:0000269" key="3">
    <source>
    </source>
</evidence>
<evidence type="ECO:0000269" key="4">
    <source>
    </source>
</evidence>
<evidence type="ECO:0000269" key="5">
    <source>
    </source>
</evidence>
<evidence type="ECO:0000269" key="6">
    <source>
    </source>
</evidence>
<evidence type="ECO:0000269" key="7">
    <source>
    </source>
</evidence>
<evidence type="ECO:0000303" key="8">
    <source>
    </source>
</evidence>
<evidence type="ECO:0000303" key="9">
    <source>
    </source>
</evidence>
<evidence type="ECO:0000303" key="10">
    <source>
    </source>
</evidence>
<evidence type="ECO:0000303" key="11">
    <source>
    </source>
</evidence>
<evidence type="ECO:0000305" key="12"/>
<evidence type="ECO:0007744" key="13">
    <source>
    </source>
</evidence>
<evidence type="ECO:0007744" key="14">
    <source>
    </source>
</evidence>
<evidence type="ECO:0007744" key="15">
    <source>
    </source>
</evidence>
<evidence type="ECO:0007744" key="16">
    <source>
    </source>
</evidence>
<accession>Q8IWC1</accession>
<accession>A2A2J0</accession>
<accession>A6NCZ7</accession>
<accession>A6NHR4</accession>
<accession>B4DWD2</accession>
<accession>H7BY77</accession>
<accession>Q5JXI5</accession>
<accession>Q5JXI6</accession>
<accession>Q6P2S1</accession>
<accession>Q9H9M8</accession>
<name>MA7D3_HUMAN</name>
<reference key="1">
    <citation type="journal article" date="2004" name="Nat. Genet.">
        <title>Complete sequencing and characterization of 21,243 full-length human cDNAs.</title>
        <authorList>
            <person name="Ota T."/>
            <person name="Suzuki Y."/>
            <person name="Nishikawa T."/>
            <person name="Otsuki T."/>
            <person name="Sugiyama T."/>
            <person name="Irie R."/>
            <person name="Wakamatsu A."/>
            <person name="Hayashi K."/>
            <person name="Sato H."/>
            <person name="Nagai K."/>
            <person name="Kimura K."/>
            <person name="Makita H."/>
            <person name="Sekine M."/>
            <person name="Obayashi M."/>
            <person name="Nishi T."/>
            <person name="Shibahara T."/>
            <person name="Tanaka T."/>
            <person name="Ishii S."/>
            <person name="Yamamoto J."/>
            <person name="Saito K."/>
            <person name="Kawai Y."/>
            <person name="Isono Y."/>
            <person name="Nakamura Y."/>
            <person name="Nagahari K."/>
            <person name="Murakami K."/>
            <person name="Yasuda T."/>
            <person name="Iwayanagi T."/>
            <person name="Wagatsuma M."/>
            <person name="Shiratori A."/>
            <person name="Sudo H."/>
            <person name="Hosoiri T."/>
            <person name="Kaku Y."/>
            <person name="Kodaira H."/>
            <person name="Kondo H."/>
            <person name="Sugawara M."/>
            <person name="Takahashi M."/>
            <person name="Kanda K."/>
            <person name="Yokoi T."/>
            <person name="Furuya T."/>
            <person name="Kikkawa E."/>
            <person name="Omura Y."/>
            <person name="Abe K."/>
            <person name="Kamihara K."/>
            <person name="Katsuta N."/>
            <person name="Sato K."/>
            <person name="Tanikawa M."/>
            <person name="Yamazaki M."/>
            <person name="Ninomiya K."/>
            <person name="Ishibashi T."/>
            <person name="Yamashita H."/>
            <person name="Murakawa K."/>
            <person name="Fujimori K."/>
            <person name="Tanai H."/>
            <person name="Kimata M."/>
            <person name="Watanabe M."/>
            <person name="Hiraoka S."/>
            <person name="Chiba Y."/>
            <person name="Ishida S."/>
            <person name="Ono Y."/>
            <person name="Takiguchi S."/>
            <person name="Watanabe S."/>
            <person name="Yosida M."/>
            <person name="Hotuta T."/>
            <person name="Kusano J."/>
            <person name="Kanehori K."/>
            <person name="Takahashi-Fujii A."/>
            <person name="Hara H."/>
            <person name="Tanase T.-O."/>
            <person name="Nomura Y."/>
            <person name="Togiya S."/>
            <person name="Komai F."/>
            <person name="Hara R."/>
            <person name="Takeuchi K."/>
            <person name="Arita M."/>
            <person name="Imose N."/>
            <person name="Musashino K."/>
            <person name="Yuuki H."/>
            <person name="Oshima A."/>
            <person name="Sasaki N."/>
            <person name="Aotsuka S."/>
            <person name="Yoshikawa Y."/>
            <person name="Matsunawa H."/>
            <person name="Ichihara T."/>
            <person name="Shiohata N."/>
            <person name="Sano S."/>
            <person name="Moriya S."/>
            <person name="Momiyama H."/>
            <person name="Satoh N."/>
            <person name="Takami S."/>
            <person name="Terashima Y."/>
            <person name="Suzuki O."/>
            <person name="Nakagawa S."/>
            <person name="Senoh A."/>
            <person name="Mizoguchi H."/>
            <person name="Goto Y."/>
            <person name="Shimizu F."/>
            <person name="Wakebe H."/>
            <person name="Hishigaki H."/>
            <person name="Watanabe T."/>
            <person name="Sugiyama A."/>
            <person name="Takemoto M."/>
            <person name="Kawakami B."/>
            <person name="Yamazaki M."/>
            <person name="Watanabe K."/>
            <person name="Kumagai A."/>
            <person name="Itakura S."/>
            <person name="Fukuzumi Y."/>
            <person name="Fujimori Y."/>
            <person name="Komiyama M."/>
            <person name="Tashiro H."/>
            <person name="Tanigami A."/>
            <person name="Fujiwara T."/>
            <person name="Ono T."/>
            <person name="Yamada K."/>
            <person name="Fujii Y."/>
            <person name="Ozaki K."/>
            <person name="Hirao M."/>
            <person name="Ohmori Y."/>
            <person name="Kawabata A."/>
            <person name="Hikiji T."/>
            <person name="Kobatake N."/>
            <person name="Inagaki H."/>
            <person name="Ikema Y."/>
            <person name="Okamoto S."/>
            <person name="Okitani R."/>
            <person name="Kawakami T."/>
            <person name="Noguchi S."/>
            <person name="Itoh T."/>
            <person name="Shigeta K."/>
            <person name="Senba T."/>
            <person name="Matsumura K."/>
            <person name="Nakajima Y."/>
            <person name="Mizuno T."/>
            <person name="Morinaga M."/>
            <person name="Sasaki M."/>
            <person name="Togashi T."/>
            <person name="Oyama M."/>
            <person name="Hata H."/>
            <person name="Watanabe M."/>
            <person name="Komatsu T."/>
            <person name="Mizushima-Sugano J."/>
            <person name="Satoh T."/>
            <person name="Shirai Y."/>
            <person name="Takahashi Y."/>
            <person name="Nakagawa K."/>
            <person name="Okumura K."/>
            <person name="Nagase T."/>
            <person name="Nomura N."/>
            <person name="Kikuchi H."/>
            <person name="Masuho Y."/>
            <person name="Yamashita R."/>
            <person name="Nakai K."/>
            <person name="Yada T."/>
            <person name="Nakamura Y."/>
            <person name="Ohara O."/>
            <person name="Isogai T."/>
            <person name="Sugano S."/>
        </authorList>
    </citation>
    <scope>NUCLEOTIDE SEQUENCE [LARGE SCALE MRNA] (ISOFORM 4)</scope>
    <scope>NUCLEOTIDE SEQUENCE [LARGE SCALE MRNA] OF 701-876 (ISOFORMS 1/2/3)</scope>
    <source>
        <tissue>Synovium</tissue>
        <tissue>Teratocarcinoma</tissue>
    </source>
</reference>
<reference key="2">
    <citation type="journal article" date="2007" name="BMC Genomics">
        <title>The full-ORF clone resource of the German cDNA consortium.</title>
        <authorList>
            <person name="Bechtel S."/>
            <person name="Rosenfelder H."/>
            <person name="Duda A."/>
            <person name="Schmidt C.P."/>
            <person name="Ernst U."/>
            <person name="Wellenreuther R."/>
            <person name="Mehrle A."/>
            <person name="Schuster C."/>
            <person name="Bahr A."/>
            <person name="Bloecker H."/>
            <person name="Heubner D."/>
            <person name="Hoerlein A."/>
            <person name="Michel G."/>
            <person name="Wedler H."/>
            <person name="Koehrer K."/>
            <person name="Ottenwaelder B."/>
            <person name="Poustka A."/>
            <person name="Wiemann S."/>
            <person name="Schupp I."/>
        </authorList>
    </citation>
    <scope>NUCLEOTIDE SEQUENCE [LARGE SCALE MRNA] (ISOFORM 3)</scope>
    <source>
        <tissue>Cervix</tissue>
    </source>
</reference>
<reference key="3">
    <citation type="journal article" date="2005" name="Nature">
        <title>The DNA sequence of the human X chromosome.</title>
        <authorList>
            <person name="Ross M.T."/>
            <person name="Grafham D.V."/>
            <person name="Coffey A.J."/>
            <person name="Scherer S."/>
            <person name="McLay K."/>
            <person name="Muzny D."/>
            <person name="Platzer M."/>
            <person name="Howell G.R."/>
            <person name="Burrows C."/>
            <person name="Bird C.P."/>
            <person name="Frankish A."/>
            <person name="Lovell F.L."/>
            <person name="Howe K.L."/>
            <person name="Ashurst J.L."/>
            <person name="Fulton R.S."/>
            <person name="Sudbrak R."/>
            <person name="Wen G."/>
            <person name="Jones M.C."/>
            <person name="Hurles M.E."/>
            <person name="Andrews T.D."/>
            <person name="Scott C.E."/>
            <person name="Searle S."/>
            <person name="Ramser J."/>
            <person name="Whittaker A."/>
            <person name="Deadman R."/>
            <person name="Carter N.P."/>
            <person name="Hunt S.E."/>
            <person name="Chen R."/>
            <person name="Cree A."/>
            <person name="Gunaratne P."/>
            <person name="Havlak P."/>
            <person name="Hodgson A."/>
            <person name="Metzker M.L."/>
            <person name="Richards S."/>
            <person name="Scott G."/>
            <person name="Steffen D."/>
            <person name="Sodergren E."/>
            <person name="Wheeler D.A."/>
            <person name="Worley K.C."/>
            <person name="Ainscough R."/>
            <person name="Ambrose K.D."/>
            <person name="Ansari-Lari M.A."/>
            <person name="Aradhya S."/>
            <person name="Ashwell R.I."/>
            <person name="Babbage A.K."/>
            <person name="Bagguley C.L."/>
            <person name="Ballabio A."/>
            <person name="Banerjee R."/>
            <person name="Barker G.E."/>
            <person name="Barlow K.F."/>
            <person name="Barrett I.P."/>
            <person name="Bates K.N."/>
            <person name="Beare D.M."/>
            <person name="Beasley H."/>
            <person name="Beasley O."/>
            <person name="Beck A."/>
            <person name="Bethel G."/>
            <person name="Blechschmidt K."/>
            <person name="Brady N."/>
            <person name="Bray-Allen S."/>
            <person name="Bridgeman A.M."/>
            <person name="Brown A.J."/>
            <person name="Brown M.J."/>
            <person name="Bonnin D."/>
            <person name="Bruford E.A."/>
            <person name="Buhay C."/>
            <person name="Burch P."/>
            <person name="Burford D."/>
            <person name="Burgess J."/>
            <person name="Burrill W."/>
            <person name="Burton J."/>
            <person name="Bye J.M."/>
            <person name="Carder C."/>
            <person name="Carrel L."/>
            <person name="Chako J."/>
            <person name="Chapman J.C."/>
            <person name="Chavez D."/>
            <person name="Chen E."/>
            <person name="Chen G."/>
            <person name="Chen Y."/>
            <person name="Chen Z."/>
            <person name="Chinault C."/>
            <person name="Ciccodicola A."/>
            <person name="Clark S.Y."/>
            <person name="Clarke G."/>
            <person name="Clee C.M."/>
            <person name="Clegg S."/>
            <person name="Clerc-Blankenburg K."/>
            <person name="Clifford K."/>
            <person name="Cobley V."/>
            <person name="Cole C.G."/>
            <person name="Conquer J.S."/>
            <person name="Corby N."/>
            <person name="Connor R.E."/>
            <person name="David R."/>
            <person name="Davies J."/>
            <person name="Davis C."/>
            <person name="Davis J."/>
            <person name="Delgado O."/>
            <person name="Deshazo D."/>
            <person name="Dhami P."/>
            <person name="Ding Y."/>
            <person name="Dinh H."/>
            <person name="Dodsworth S."/>
            <person name="Draper H."/>
            <person name="Dugan-Rocha S."/>
            <person name="Dunham A."/>
            <person name="Dunn M."/>
            <person name="Durbin K.J."/>
            <person name="Dutta I."/>
            <person name="Eades T."/>
            <person name="Ellwood M."/>
            <person name="Emery-Cohen A."/>
            <person name="Errington H."/>
            <person name="Evans K.L."/>
            <person name="Faulkner L."/>
            <person name="Francis F."/>
            <person name="Frankland J."/>
            <person name="Fraser A.E."/>
            <person name="Galgoczy P."/>
            <person name="Gilbert J."/>
            <person name="Gill R."/>
            <person name="Gloeckner G."/>
            <person name="Gregory S.G."/>
            <person name="Gribble S."/>
            <person name="Griffiths C."/>
            <person name="Grocock R."/>
            <person name="Gu Y."/>
            <person name="Gwilliam R."/>
            <person name="Hamilton C."/>
            <person name="Hart E.A."/>
            <person name="Hawes A."/>
            <person name="Heath P.D."/>
            <person name="Heitmann K."/>
            <person name="Hennig S."/>
            <person name="Hernandez J."/>
            <person name="Hinzmann B."/>
            <person name="Ho S."/>
            <person name="Hoffs M."/>
            <person name="Howden P.J."/>
            <person name="Huckle E.J."/>
            <person name="Hume J."/>
            <person name="Hunt P.J."/>
            <person name="Hunt A.R."/>
            <person name="Isherwood J."/>
            <person name="Jacob L."/>
            <person name="Johnson D."/>
            <person name="Jones S."/>
            <person name="de Jong P.J."/>
            <person name="Joseph S.S."/>
            <person name="Keenan S."/>
            <person name="Kelly S."/>
            <person name="Kershaw J.K."/>
            <person name="Khan Z."/>
            <person name="Kioschis P."/>
            <person name="Klages S."/>
            <person name="Knights A.J."/>
            <person name="Kosiura A."/>
            <person name="Kovar-Smith C."/>
            <person name="Laird G.K."/>
            <person name="Langford C."/>
            <person name="Lawlor S."/>
            <person name="Leversha M."/>
            <person name="Lewis L."/>
            <person name="Liu W."/>
            <person name="Lloyd C."/>
            <person name="Lloyd D.M."/>
            <person name="Loulseged H."/>
            <person name="Loveland J.E."/>
            <person name="Lovell J.D."/>
            <person name="Lozado R."/>
            <person name="Lu J."/>
            <person name="Lyne R."/>
            <person name="Ma J."/>
            <person name="Maheshwari M."/>
            <person name="Matthews L.H."/>
            <person name="McDowall J."/>
            <person name="McLaren S."/>
            <person name="McMurray A."/>
            <person name="Meidl P."/>
            <person name="Meitinger T."/>
            <person name="Milne S."/>
            <person name="Miner G."/>
            <person name="Mistry S.L."/>
            <person name="Morgan M."/>
            <person name="Morris S."/>
            <person name="Mueller I."/>
            <person name="Mullikin J.C."/>
            <person name="Nguyen N."/>
            <person name="Nordsiek G."/>
            <person name="Nyakatura G."/>
            <person name="O'dell C.N."/>
            <person name="Okwuonu G."/>
            <person name="Palmer S."/>
            <person name="Pandian R."/>
            <person name="Parker D."/>
            <person name="Parrish J."/>
            <person name="Pasternak S."/>
            <person name="Patel D."/>
            <person name="Pearce A.V."/>
            <person name="Pearson D.M."/>
            <person name="Pelan S.E."/>
            <person name="Perez L."/>
            <person name="Porter K.M."/>
            <person name="Ramsey Y."/>
            <person name="Reichwald K."/>
            <person name="Rhodes S."/>
            <person name="Ridler K.A."/>
            <person name="Schlessinger D."/>
            <person name="Schueler M.G."/>
            <person name="Sehra H.K."/>
            <person name="Shaw-Smith C."/>
            <person name="Shen H."/>
            <person name="Sheridan E.M."/>
            <person name="Shownkeen R."/>
            <person name="Skuce C.D."/>
            <person name="Smith M.L."/>
            <person name="Sotheran E.C."/>
            <person name="Steingruber H.E."/>
            <person name="Steward C.A."/>
            <person name="Storey R."/>
            <person name="Swann R.M."/>
            <person name="Swarbreck D."/>
            <person name="Tabor P.E."/>
            <person name="Taudien S."/>
            <person name="Taylor T."/>
            <person name="Teague B."/>
            <person name="Thomas K."/>
            <person name="Thorpe A."/>
            <person name="Timms K."/>
            <person name="Tracey A."/>
            <person name="Trevanion S."/>
            <person name="Tromans A.C."/>
            <person name="d'Urso M."/>
            <person name="Verduzco D."/>
            <person name="Villasana D."/>
            <person name="Waldron L."/>
            <person name="Wall M."/>
            <person name="Wang Q."/>
            <person name="Warren J."/>
            <person name="Warry G.L."/>
            <person name="Wei X."/>
            <person name="West A."/>
            <person name="Whitehead S.L."/>
            <person name="Whiteley M.N."/>
            <person name="Wilkinson J.E."/>
            <person name="Willey D.L."/>
            <person name="Williams G."/>
            <person name="Williams L."/>
            <person name="Williamson A."/>
            <person name="Williamson H."/>
            <person name="Wilming L."/>
            <person name="Woodmansey R.L."/>
            <person name="Wray P.W."/>
            <person name="Yen J."/>
            <person name="Zhang J."/>
            <person name="Zhou J."/>
            <person name="Zoghbi H."/>
            <person name="Zorilla S."/>
            <person name="Buck D."/>
            <person name="Reinhardt R."/>
            <person name="Poustka A."/>
            <person name="Rosenthal A."/>
            <person name="Lehrach H."/>
            <person name="Meindl A."/>
            <person name="Minx P.J."/>
            <person name="Hillier L.W."/>
            <person name="Willard H.F."/>
            <person name="Wilson R.K."/>
            <person name="Waterston R.H."/>
            <person name="Rice C.M."/>
            <person name="Vaudin M."/>
            <person name="Coulson A."/>
            <person name="Nelson D.L."/>
            <person name="Weinstock G."/>
            <person name="Sulston J.E."/>
            <person name="Durbin R.M."/>
            <person name="Hubbard T."/>
            <person name="Gibbs R.A."/>
            <person name="Beck S."/>
            <person name="Rogers J."/>
            <person name="Bentley D.R."/>
        </authorList>
    </citation>
    <scope>NUCLEOTIDE SEQUENCE [LARGE SCALE GENOMIC DNA]</scope>
</reference>
<reference key="4">
    <citation type="submission" date="2005-09" db="EMBL/GenBank/DDBJ databases">
        <authorList>
            <person name="Mural R.J."/>
            <person name="Istrail S."/>
            <person name="Sutton G.G."/>
            <person name="Florea L."/>
            <person name="Halpern A.L."/>
            <person name="Mobarry C.M."/>
            <person name="Lippert R."/>
            <person name="Walenz B."/>
            <person name="Shatkay H."/>
            <person name="Dew I."/>
            <person name="Miller J.R."/>
            <person name="Flanigan M.J."/>
            <person name="Edwards N.J."/>
            <person name="Bolanos R."/>
            <person name="Fasulo D."/>
            <person name="Halldorsson B.V."/>
            <person name="Hannenhalli S."/>
            <person name="Turner R."/>
            <person name="Yooseph S."/>
            <person name="Lu F."/>
            <person name="Nusskern D.R."/>
            <person name="Shue B.C."/>
            <person name="Zheng X.H."/>
            <person name="Zhong F."/>
            <person name="Delcher A.L."/>
            <person name="Huson D.H."/>
            <person name="Kravitz S.A."/>
            <person name="Mouchard L."/>
            <person name="Reinert K."/>
            <person name="Remington K.A."/>
            <person name="Clark A.G."/>
            <person name="Waterman M.S."/>
            <person name="Eichler E.E."/>
            <person name="Adams M.D."/>
            <person name="Hunkapiller M.W."/>
            <person name="Myers E.W."/>
            <person name="Venter J.C."/>
        </authorList>
    </citation>
    <scope>NUCLEOTIDE SEQUENCE [LARGE SCALE GENOMIC DNA]</scope>
</reference>
<reference key="5">
    <citation type="journal article" date="2004" name="Genome Res.">
        <title>The status, quality, and expansion of the NIH full-length cDNA project: the Mammalian Gene Collection (MGC).</title>
        <authorList>
            <consortium name="The MGC Project Team"/>
        </authorList>
    </citation>
    <scope>NUCLEOTIDE SEQUENCE [LARGE SCALE MRNA] (ISOFORMS 1 AND 2)</scope>
    <scope>VARIANTS ALA-502 AND ARG-628</scope>
    <source>
        <tissue>Brain</tissue>
        <tissue>Prostate</tissue>
    </source>
</reference>
<reference key="6">
    <citation type="journal article" date="2005" name="Mol. Cell. Proteomics">
        <title>Proteome analysis of the human mitotic spindle.</title>
        <authorList>
            <person name="Sauer G."/>
            <person name="Koerner R."/>
            <person name="Hanisch A."/>
            <person name="Ries A."/>
            <person name="Nigg E.A."/>
            <person name="Sillje H.H.W."/>
        </authorList>
    </citation>
    <scope>SUBCELLULAR LOCATION</scope>
    <scope>IDENTIFICATION BY MASS SPECTROMETRY</scope>
</reference>
<reference key="7">
    <citation type="journal article" date="2008" name="Proc. Natl. Acad. Sci. U.S.A.">
        <title>A quantitative atlas of mitotic phosphorylation.</title>
        <authorList>
            <person name="Dephoure N."/>
            <person name="Zhou C."/>
            <person name="Villen J."/>
            <person name="Beausoleil S.A."/>
            <person name="Bakalarski C.E."/>
            <person name="Elledge S.J."/>
            <person name="Gygi S.P."/>
        </authorList>
    </citation>
    <scope>PHOSPHORYLATION [LARGE SCALE ANALYSIS] AT SER-322; SER-457; SER-461 AND SER-524</scope>
    <scope>IDENTIFICATION BY MASS SPECTROMETRY [LARGE SCALE ANALYSIS]</scope>
    <source>
        <tissue>Cervix carcinoma</tissue>
    </source>
</reference>
<reference key="8">
    <citation type="journal article" date="2009" name="Anal. Chem.">
        <title>Lys-N and trypsin cover complementary parts of the phosphoproteome in a refined SCX-based approach.</title>
        <authorList>
            <person name="Gauci S."/>
            <person name="Helbig A.O."/>
            <person name="Slijper M."/>
            <person name="Krijgsveld J."/>
            <person name="Heck A.J."/>
            <person name="Mohammed S."/>
        </authorList>
    </citation>
    <scope>IDENTIFICATION BY MASS SPECTROMETRY [LARGE SCALE ANALYSIS]</scope>
</reference>
<reference key="9">
    <citation type="journal article" date="2009" name="Sci. Signal.">
        <title>Quantitative phosphoproteomic analysis of T cell receptor signaling reveals system-wide modulation of protein-protein interactions.</title>
        <authorList>
            <person name="Mayya V."/>
            <person name="Lundgren D.H."/>
            <person name="Hwang S.-I."/>
            <person name="Rezaul K."/>
            <person name="Wu L."/>
            <person name="Eng J.K."/>
            <person name="Rodionov V."/>
            <person name="Han D.K."/>
        </authorList>
    </citation>
    <scope>IDENTIFICATION BY MASS SPECTROMETRY [LARGE SCALE ANALYSIS]</scope>
    <source>
        <tissue>Leukemic T-cell</tissue>
    </source>
</reference>
<reference key="10">
    <citation type="journal article" date="2010" name="Sci. Signal.">
        <title>Quantitative phosphoproteomics reveals widespread full phosphorylation site occupancy during mitosis.</title>
        <authorList>
            <person name="Olsen J.V."/>
            <person name="Vermeulen M."/>
            <person name="Santamaria A."/>
            <person name="Kumar C."/>
            <person name="Miller M.L."/>
            <person name="Jensen L.J."/>
            <person name="Gnad F."/>
            <person name="Cox J."/>
            <person name="Jensen T.S."/>
            <person name="Nigg E.A."/>
            <person name="Brunak S."/>
            <person name="Mann M."/>
        </authorList>
    </citation>
    <scope>PHOSPHORYLATION [LARGE SCALE ANALYSIS] AT SER-770</scope>
    <scope>IDENTIFICATION BY MASS SPECTROMETRY [LARGE SCALE ANALYSIS]</scope>
    <source>
        <tissue>Cervix carcinoma</tissue>
    </source>
</reference>
<reference key="11">
    <citation type="journal article" date="2011" name="BMC Syst. Biol.">
        <title>Initial characterization of the human central proteome.</title>
        <authorList>
            <person name="Burkard T.R."/>
            <person name="Planyavsky M."/>
            <person name="Kaupe I."/>
            <person name="Breitwieser F.P."/>
            <person name="Buerckstuemmer T."/>
            <person name="Bennett K.L."/>
            <person name="Superti-Furga G."/>
            <person name="Colinge J."/>
        </authorList>
    </citation>
    <scope>IDENTIFICATION BY MASS SPECTROMETRY [LARGE SCALE ANALYSIS]</scope>
</reference>
<reference key="12">
    <citation type="journal article" date="2011" name="Cell Cycle">
        <title>Mdp3 is a novel microtubule-binding protein that regulates microtubule assembly and stability.</title>
        <authorList>
            <person name="Sun X."/>
            <person name="Shi X."/>
            <person name="Liu M."/>
            <person name="Li D."/>
            <person name="Zhang L."/>
            <person name="Liu X."/>
            <person name="Zhou J."/>
        </authorList>
    </citation>
    <scope>FUNCTION</scope>
    <scope>INTERACTION WITH MICROTUBULES AND TUBULIN</scope>
    <scope>INDUCTION</scope>
    <scope>SUBCELLULAR LOCATION</scope>
</reference>
<reference key="13">
    <citation type="journal article" date="2011" name="Sci. Signal.">
        <title>System-wide temporal characterization of the proteome and phosphoproteome of human embryonic stem cell differentiation.</title>
        <authorList>
            <person name="Rigbolt K.T."/>
            <person name="Prokhorova T.A."/>
            <person name="Akimov V."/>
            <person name="Henningsen J."/>
            <person name="Johansen P.T."/>
            <person name="Kratchmarova I."/>
            <person name="Kassem M."/>
            <person name="Mann M."/>
            <person name="Olsen J.V."/>
            <person name="Blagoev B."/>
        </authorList>
    </citation>
    <scope>IDENTIFICATION BY MASS SPECTROMETRY [LARGE SCALE ANALYSIS]</scope>
</reference>
<reference key="14">
    <citation type="journal article" date="2012" name="Proc. Natl. Acad. Sci. U.S.A.">
        <title>N-terminal acetylome analyses and functional insights of the N-terminal acetyltransferase NatB.</title>
        <authorList>
            <person name="Van Damme P."/>
            <person name="Lasa M."/>
            <person name="Polevoda B."/>
            <person name="Gazquez C."/>
            <person name="Elosegui-Artola A."/>
            <person name="Kim D.S."/>
            <person name="De Juan-Pardo E."/>
            <person name="Demeyer K."/>
            <person name="Hole K."/>
            <person name="Larrea E."/>
            <person name="Timmerman E."/>
            <person name="Prieto J."/>
            <person name="Arnesen T."/>
            <person name="Sherman F."/>
            <person name="Gevaert K."/>
            <person name="Aldabe R."/>
        </authorList>
    </citation>
    <scope>ACETYLATION [LARGE SCALE ANALYSIS] AT MET-1</scope>
    <scope>IDENTIFICATION BY MASS SPECTROMETRY [LARGE SCALE ANALYSIS]</scope>
</reference>
<reference key="15">
    <citation type="journal article" date="2013" name="J. Proteome Res.">
        <title>Toward a comprehensive characterization of a human cancer cell phosphoproteome.</title>
        <authorList>
            <person name="Zhou H."/>
            <person name="Di Palma S."/>
            <person name="Preisinger C."/>
            <person name="Peng M."/>
            <person name="Polat A.N."/>
            <person name="Heck A.J."/>
            <person name="Mohammed S."/>
        </authorList>
    </citation>
    <scope>PHOSPHORYLATION [LARGE SCALE ANALYSIS] AT SER-185; SER-441; SER-461; SER-490; SER-817 AND SER-832</scope>
    <scope>IDENTIFICATION BY MASS SPECTROMETRY [LARGE SCALE ANALYSIS]</scope>
    <source>
        <tissue>Cervix carcinoma</tissue>
        <tissue>Erythroleukemia</tissue>
    </source>
</reference>
<reference key="16">
    <citation type="journal article" date="2014" name="PLoS ONE">
        <title>C-terminal region of MAP7 domain containing protein 3 (MAP7D3) promotes microtubule polymerization by binding at the C-terminal tail of tubulin.</title>
        <authorList>
            <person name="Yadav S."/>
            <person name="Verma P.J."/>
            <person name="Panda D."/>
        </authorList>
    </citation>
    <scope>INTERACTION WITH MICROTUBULES AND TUBULIN</scope>
    <scope>FUNCTION</scope>
</reference>
<reference key="17">
    <citation type="journal article" date="2016" name="Ann. Neurol.">
        <title>ADSSL1 mutation relevant to autosomal recessive adolescent onset distal myopathy.</title>
        <authorList>
            <person name="Park H.J."/>
            <person name="Hong Y.B."/>
            <person name="Choi Y.C."/>
            <person name="Lee J."/>
            <person name="Kim E.J."/>
            <person name="Lee J.S."/>
            <person name="Mo W.M."/>
            <person name="Ki S.M."/>
            <person name="Kim H.I."/>
            <person name="Kim H.J."/>
            <person name="Hyun Y.S."/>
            <person name="Hong H.D."/>
            <person name="Nam K."/>
            <person name="Jung S.C."/>
            <person name="Kim S.B."/>
            <person name="Kim S.H."/>
            <person name="Kim D.H."/>
            <person name="Oh K.W."/>
            <person name="Kim S.H."/>
            <person name="Yoo J.H."/>
            <person name="Lee J.E."/>
            <person name="Chung K.W."/>
            <person name="Choi B.O."/>
        </authorList>
    </citation>
    <scope>VARIANT ARG-561</scope>
</reference>
<protein>
    <recommendedName>
        <fullName>MAP7 domain-containing protein 3</fullName>
    </recommendedName>
</protein>
<keyword id="KW-0007">Acetylation</keyword>
<keyword id="KW-0025">Alternative splicing</keyword>
<keyword id="KW-0175">Coiled coil</keyword>
<keyword id="KW-0963">Cytoplasm</keyword>
<keyword id="KW-0206">Cytoskeleton</keyword>
<keyword id="KW-0597">Phosphoprotein</keyword>
<keyword id="KW-1267">Proteomics identification</keyword>
<keyword id="KW-1185">Reference proteome</keyword>
<organism>
    <name type="scientific">Homo sapiens</name>
    <name type="common">Human</name>
    <dbReference type="NCBI Taxonomy" id="9606"/>
    <lineage>
        <taxon>Eukaryota</taxon>
        <taxon>Metazoa</taxon>
        <taxon>Chordata</taxon>
        <taxon>Craniata</taxon>
        <taxon>Vertebrata</taxon>
        <taxon>Euteleostomi</taxon>
        <taxon>Mammalia</taxon>
        <taxon>Eutheria</taxon>
        <taxon>Euarchontoglires</taxon>
        <taxon>Primates</taxon>
        <taxon>Haplorrhini</taxon>
        <taxon>Catarrhini</taxon>
        <taxon>Hominidae</taxon>
        <taxon>Homo</taxon>
    </lineage>
</organism>
<dbReference type="EMBL" id="AK022711">
    <property type="protein sequence ID" value="BAB14195.1"/>
    <property type="molecule type" value="mRNA"/>
</dbReference>
<dbReference type="EMBL" id="AK301478">
    <property type="protein sequence ID" value="BAG62994.1"/>
    <property type="molecule type" value="mRNA"/>
</dbReference>
<dbReference type="EMBL" id="AL832120">
    <property type="status" value="NOT_ANNOTATED_CDS"/>
    <property type="molecule type" value="mRNA"/>
</dbReference>
<dbReference type="EMBL" id="AL078638">
    <property type="status" value="NOT_ANNOTATED_CDS"/>
    <property type="molecule type" value="Genomic_DNA"/>
</dbReference>
<dbReference type="EMBL" id="CH471150">
    <property type="protein sequence ID" value="EAW88475.1"/>
    <property type="molecule type" value="Genomic_DNA"/>
</dbReference>
<dbReference type="EMBL" id="BC040518">
    <property type="protein sequence ID" value="AAH40518.1"/>
    <property type="molecule type" value="mRNA"/>
</dbReference>
<dbReference type="EMBL" id="BC064350">
    <property type="protein sequence ID" value="AAH64350.1"/>
    <property type="status" value="ALT_SEQ"/>
    <property type="molecule type" value="mRNA"/>
</dbReference>
<dbReference type="CCDS" id="CCDS44004.1">
    <molecule id="Q8IWC1-1"/>
</dbReference>
<dbReference type="CCDS" id="CCDS55508.1">
    <molecule id="Q8IWC1-3"/>
</dbReference>
<dbReference type="CCDS" id="CCDS55509.1">
    <molecule id="Q8IWC1-4"/>
</dbReference>
<dbReference type="RefSeq" id="NP_001166987.1">
    <molecule id="Q8IWC1-4"/>
    <property type="nucleotide sequence ID" value="NM_001173516.1"/>
</dbReference>
<dbReference type="RefSeq" id="NP_001166988.1">
    <molecule id="Q8IWC1-3"/>
    <property type="nucleotide sequence ID" value="NM_001173517.2"/>
</dbReference>
<dbReference type="RefSeq" id="NP_078873.2">
    <molecule id="Q8IWC1-1"/>
    <property type="nucleotide sequence ID" value="NM_024597.3"/>
</dbReference>
<dbReference type="SMR" id="Q8IWC1"/>
<dbReference type="BioGRID" id="122777">
    <property type="interactions" value="132"/>
</dbReference>
<dbReference type="FunCoup" id="Q8IWC1">
    <property type="interactions" value="840"/>
</dbReference>
<dbReference type="IntAct" id="Q8IWC1">
    <property type="interactions" value="61"/>
</dbReference>
<dbReference type="MINT" id="Q8IWC1"/>
<dbReference type="STRING" id="9606.ENSP00000318086"/>
<dbReference type="GlyGen" id="Q8IWC1">
    <property type="glycosylation" value="1 site, 1 O-linked glycan (1 site)"/>
</dbReference>
<dbReference type="iPTMnet" id="Q8IWC1"/>
<dbReference type="PhosphoSitePlus" id="Q8IWC1"/>
<dbReference type="BioMuta" id="MAP7D3"/>
<dbReference type="DMDM" id="158705880"/>
<dbReference type="jPOST" id="Q8IWC1"/>
<dbReference type="MassIVE" id="Q8IWC1"/>
<dbReference type="PaxDb" id="9606-ENSP00000318086"/>
<dbReference type="PeptideAtlas" id="Q8IWC1"/>
<dbReference type="ProteomicsDB" id="43531"/>
<dbReference type="ProteomicsDB" id="70842">
    <molecule id="Q8IWC1-1"/>
</dbReference>
<dbReference type="ProteomicsDB" id="70843">
    <molecule id="Q8IWC1-2"/>
</dbReference>
<dbReference type="ProteomicsDB" id="70844">
    <molecule id="Q8IWC1-3"/>
</dbReference>
<dbReference type="Pumba" id="Q8IWC1"/>
<dbReference type="Antibodypedia" id="51701">
    <property type="antibodies" value="15 antibodies from 9 providers"/>
</dbReference>
<dbReference type="DNASU" id="79649"/>
<dbReference type="Ensembl" id="ENST00000316077.14">
    <molecule id="Q8IWC1-1"/>
    <property type="protein sequence ID" value="ENSP00000318086.9"/>
    <property type="gene ID" value="ENSG00000129680.16"/>
</dbReference>
<dbReference type="Ensembl" id="ENST00000370661.5">
    <molecule id="Q8IWC1-3"/>
    <property type="protein sequence ID" value="ENSP00000359695.1"/>
    <property type="gene ID" value="ENSG00000129680.16"/>
</dbReference>
<dbReference type="Ensembl" id="ENST00000370663.9">
    <molecule id="Q8IWC1-4"/>
    <property type="protein sequence ID" value="ENSP00000359697.5"/>
    <property type="gene ID" value="ENSG00000129680.16"/>
</dbReference>
<dbReference type="GeneID" id="79649"/>
<dbReference type="KEGG" id="hsa:79649"/>
<dbReference type="MANE-Select" id="ENST00000316077.14">
    <property type="protein sequence ID" value="ENSP00000318086.9"/>
    <property type="RefSeq nucleotide sequence ID" value="NM_024597.4"/>
    <property type="RefSeq protein sequence ID" value="NP_078873.2"/>
</dbReference>
<dbReference type="UCSC" id="uc004ezs.4">
    <molecule id="Q8IWC1-1"/>
    <property type="organism name" value="human"/>
</dbReference>
<dbReference type="AGR" id="HGNC:25742"/>
<dbReference type="CTD" id="79649"/>
<dbReference type="DisGeNET" id="79649"/>
<dbReference type="GeneCards" id="MAP7D3"/>
<dbReference type="HGNC" id="HGNC:25742">
    <property type="gene designation" value="MAP7D3"/>
</dbReference>
<dbReference type="HPA" id="ENSG00000129680">
    <property type="expression patterns" value="Low tissue specificity"/>
</dbReference>
<dbReference type="MIM" id="300930">
    <property type="type" value="gene"/>
</dbReference>
<dbReference type="neXtProt" id="NX_Q8IWC1"/>
<dbReference type="OpenTargets" id="ENSG00000129680"/>
<dbReference type="PharmGKB" id="PA162394972"/>
<dbReference type="VEuPathDB" id="HostDB:ENSG00000129680"/>
<dbReference type="eggNOG" id="ENOG502SDH7">
    <property type="taxonomic scope" value="Eukaryota"/>
</dbReference>
<dbReference type="GeneTree" id="ENSGT00950000182941"/>
<dbReference type="InParanoid" id="Q8IWC1"/>
<dbReference type="OMA" id="CDMKTFR"/>
<dbReference type="OrthoDB" id="9950536at2759"/>
<dbReference type="PAN-GO" id="Q8IWC1">
    <property type="GO annotations" value="2 GO annotations based on evolutionary models"/>
</dbReference>
<dbReference type="PhylomeDB" id="Q8IWC1"/>
<dbReference type="TreeFam" id="TF332273"/>
<dbReference type="PathwayCommons" id="Q8IWC1"/>
<dbReference type="SignaLink" id="Q8IWC1"/>
<dbReference type="BioGRID-ORCS" id="79649">
    <property type="hits" value="13 hits in 782 CRISPR screens"/>
</dbReference>
<dbReference type="ChiTaRS" id="MAP7D3">
    <property type="organism name" value="human"/>
</dbReference>
<dbReference type="GenomeRNAi" id="79649"/>
<dbReference type="Pharos" id="Q8IWC1">
    <property type="development level" value="Tbio"/>
</dbReference>
<dbReference type="PRO" id="PR:Q8IWC1"/>
<dbReference type="Proteomes" id="UP000005640">
    <property type="component" value="Chromosome X"/>
</dbReference>
<dbReference type="RNAct" id="Q8IWC1">
    <property type="molecule type" value="protein"/>
</dbReference>
<dbReference type="Bgee" id="ENSG00000129680">
    <property type="expression patterns" value="Expressed in calcaneal tendon and 127 other cell types or tissues"/>
</dbReference>
<dbReference type="ExpressionAtlas" id="Q8IWC1">
    <property type="expression patterns" value="baseline and differential"/>
</dbReference>
<dbReference type="GO" id="GO:0005737">
    <property type="term" value="C:cytoplasm"/>
    <property type="evidence" value="ECO:0007669"/>
    <property type="project" value="UniProtKB-KW"/>
</dbReference>
<dbReference type="GO" id="GO:0016020">
    <property type="term" value="C:membrane"/>
    <property type="evidence" value="ECO:0007005"/>
    <property type="project" value="UniProtKB"/>
</dbReference>
<dbReference type="GO" id="GO:0015630">
    <property type="term" value="C:microtubule cytoskeleton"/>
    <property type="evidence" value="ECO:0000318"/>
    <property type="project" value="GO_Central"/>
</dbReference>
<dbReference type="GO" id="GO:0005819">
    <property type="term" value="C:spindle"/>
    <property type="evidence" value="ECO:0007669"/>
    <property type="project" value="UniProtKB-SubCell"/>
</dbReference>
<dbReference type="GO" id="GO:0008017">
    <property type="term" value="F:microtubule binding"/>
    <property type="evidence" value="ECO:0000314"/>
    <property type="project" value="UniProtKB"/>
</dbReference>
<dbReference type="GO" id="GO:0015631">
    <property type="term" value="F:tubulin binding"/>
    <property type="evidence" value="ECO:0000314"/>
    <property type="project" value="UniProtKB"/>
</dbReference>
<dbReference type="GO" id="GO:0000226">
    <property type="term" value="P:microtubule cytoskeleton organization"/>
    <property type="evidence" value="ECO:0000314"/>
    <property type="project" value="UniProtKB"/>
</dbReference>
<dbReference type="GO" id="GO:0046785">
    <property type="term" value="P:microtubule polymerization"/>
    <property type="evidence" value="ECO:0000314"/>
    <property type="project" value="UniProtKB"/>
</dbReference>
<dbReference type="InterPro" id="IPR051483">
    <property type="entry name" value="MAP7_domain-containing"/>
</dbReference>
<dbReference type="InterPro" id="IPR008604">
    <property type="entry name" value="MAP7_fam"/>
</dbReference>
<dbReference type="PANTHER" id="PTHR15073:SF5">
    <property type="entry name" value="MAP7 DOMAIN-CONTAINING PROTEIN 3"/>
    <property type="match status" value="1"/>
</dbReference>
<dbReference type="PANTHER" id="PTHR15073">
    <property type="entry name" value="MICROTUBULE-ASSOCIATED PROTEIN"/>
    <property type="match status" value="1"/>
</dbReference>
<dbReference type="Pfam" id="PF05672">
    <property type="entry name" value="MAP7"/>
    <property type="match status" value="1"/>
</dbReference>
<proteinExistence type="evidence at protein level"/>
<feature type="chain" id="PRO_0000306812" description="MAP7 domain-containing protein 3">
    <location>
        <begin position="1"/>
        <end position="876"/>
    </location>
</feature>
<feature type="region of interest" description="Disordered" evidence="2">
    <location>
        <begin position="72"/>
        <end position="137"/>
    </location>
</feature>
<feature type="region of interest" description="Disordered" evidence="2">
    <location>
        <begin position="170"/>
        <end position="246"/>
    </location>
</feature>
<feature type="region of interest" description="Disordered" evidence="2">
    <location>
        <begin position="407"/>
        <end position="475"/>
    </location>
</feature>
<feature type="region of interest" description="Disordered" evidence="2">
    <location>
        <begin position="509"/>
        <end position="533"/>
    </location>
</feature>
<feature type="region of interest" description="Disordered" evidence="2">
    <location>
        <begin position="613"/>
        <end position="697"/>
    </location>
</feature>
<feature type="region of interest" description="Disordered" evidence="2">
    <location>
        <begin position="723"/>
        <end position="754"/>
    </location>
</feature>
<feature type="region of interest" description="Disordered" evidence="2">
    <location>
        <begin position="802"/>
        <end position="876"/>
    </location>
</feature>
<feature type="coiled-coil region" evidence="1">
    <location>
        <begin position="65"/>
        <end position="144"/>
    </location>
</feature>
<feature type="coiled-coil region" evidence="1">
    <location>
        <begin position="558"/>
        <end position="640"/>
    </location>
</feature>
<feature type="coiled-coil region" evidence="1">
    <location>
        <begin position="689"/>
        <end position="724"/>
    </location>
</feature>
<feature type="compositionally biased region" description="Polar residues" evidence="2">
    <location>
        <begin position="171"/>
        <end position="183"/>
    </location>
</feature>
<feature type="compositionally biased region" description="Polar residues" evidence="2">
    <location>
        <begin position="191"/>
        <end position="211"/>
    </location>
</feature>
<feature type="compositionally biased region" description="Basic and acidic residues" evidence="2">
    <location>
        <begin position="214"/>
        <end position="244"/>
    </location>
</feature>
<feature type="compositionally biased region" description="Basic and acidic residues" evidence="2">
    <location>
        <begin position="425"/>
        <end position="438"/>
    </location>
</feature>
<feature type="compositionally biased region" description="Basic and acidic residues" evidence="2">
    <location>
        <begin position="465"/>
        <end position="475"/>
    </location>
</feature>
<feature type="compositionally biased region" description="Polar residues" evidence="2">
    <location>
        <begin position="510"/>
        <end position="521"/>
    </location>
</feature>
<feature type="compositionally biased region" description="Basic and acidic residues" evidence="2">
    <location>
        <begin position="613"/>
        <end position="639"/>
    </location>
</feature>
<feature type="compositionally biased region" description="Basic and acidic residues" evidence="2">
    <location>
        <begin position="680"/>
        <end position="697"/>
    </location>
</feature>
<feature type="compositionally biased region" description="Acidic residues" evidence="2">
    <location>
        <begin position="742"/>
        <end position="752"/>
    </location>
</feature>
<feature type="compositionally biased region" description="Polar residues" evidence="2">
    <location>
        <begin position="820"/>
        <end position="830"/>
    </location>
</feature>
<feature type="compositionally biased region" description="Basic residues" evidence="2">
    <location>
        <begin position="831"/>
        <end position="842"/>
    </location>
</feature>
<feature type="compositionally biased region" description="Polar residues" evidence="2">
    <location>
        <begin position="848"/>
        <end position="860"/>
    </location>
</feature>
<feature type="compositionally biased region" description="Basic and acidic residues" evidence="2">
    <location>
        <begin position="861"/>
        <end position="876"/>
    </location>
</feature>
<feature type="modified residue" description="N-acetylmethionine" evidence="15">
    <location>
        <position position="1"/>
    </location>
</feature>
<feature type="modified residue" description="Phosphoserine" evidence="16">
    <location>
        <position position="185"/>
    </location>
</feature>
<feature type="modified residue" description="Phosphoserine" evidence="13">
    <location>
        <position position="322"/>
    </location>
</feature>
<feature type="modified residue" description="Phosphoserine" evidence="16">
    <location>
        <position position="441"/>
    </location>
</feature>
<feature type="modified residue" description="Phosphoserine" evidence="13">
    <location>
        <position position="457"/>
    </location>
</feature>
<feature type="modified residue" description="Phosphoserine" evidence="13 16">
    <location>
        <position position="461"/>
    </location>
</feature>
<feature type="modified residue" description="Phosphoserine" evidence="16">
    <location>
        <position position="490"/>
    </location>
</feature>
<feature type="modified residue" description="Phosphoserine" evidence="13">
    <location>
        <position position="524"/>
    </location>
</feature>
<feature type="modified residue" description="Phosphoserine" evidence="14">
    <location>
        <position position="770"/>
    </location>
</feature>
<feature type="modified residue" description="Phosphoserine" evidence="16">
    <location>
        <position position="817"/>
    </location>
</feature>
<feature type="modified residue" description="Phosphoserine" evidence="16">
    <location>
        <position position="832"/>
    </location>
</feature>
<feature type="splice variant" id="VSP_045008" description="In isoform 4." evidence="8">
    <original>MMADGAAAGAGGSPSLRELRARM</original>
    <variation>MTSPR</variation>
    <location>
        <begin position="1"/>
        <end position="23"/>
    </location>
</feature>
<feature type="splice variant" id="VSP_028498" description="In isoform 3." evidence="10">
    <original>ANKRSASTEKLEQGTSALIRQMPLSSAGLQNSVAKR</original>
    <variation>G</variation>
    <location>
        <begin position="179"/>
        <end position="214"/>
    </location>
</feature>
<feature type="splice variant" id="VSP_028499" description="In isoform 2." evidence="9">
    <location>
        <begin position="246"/>
        <end position="286"/>
    </location>
</feature>
<feature type="sequence variant" id="VAR_035314" description="In dbSNP:rs1055497." evidence="3">
    <original>E</original>
    <variation>A</variation>
    <location>
        <position position="502"/>
    </location>
</feature>
<feature type="sequence variant" id="VAR_077003" description="In dbSNP:rs748582851." evidence="7">
    <original>K</original>
    <variation>R</variation>
    <location>
        <position position="561"/>
    </location>
</feature>
<feature type="sequence variant" id="VAR_035315" description="In dbSNP:rs2273221." evidence="3">
    <original>Q</original>
    <variation>R</variation>
    <location>
        <position position="628"/>
    </location>
</feature>
<feature type="sequence conflict" description="In Ref. 1; BAG62994." evidence="12" ref="1">
    <original>L</original>
    <variation>S</variation>
    <location>
        <position position="71"/>
    </location>
</feature>
<feature type="sequence conflict" description="In Ref. 1; BAG62994." evidence="12" ref="1">
    <original>K</original>
    <variation>R</variation>
    <location>
        <position position="447"/>
    </location>
</feature>
<feature type="sequence conflict" description="In Ref. 5; AAH40518." evidence="12" ref="5">
    <original>A</original>
    <variation>T</variation>
    <location>
        <position position="448"/>
    </location>
</feature>
<feature type="sequence conflict" description="In Ref. 2; AL832120." evidence="12" ref="2">
    <original>R</original>
    <variation>Q</variation>
    <location>
        <position position="623"/>
    </location>
</feature>
<comment type="function">
    <text evidence="5 6">Promotes the assembly and stability of microtubules.</text>
</comment>
<comment type="subunit">
    <text evidence="5 6">Interacts (via N-terminus coiled coil domains) with tubulin and microtubules.</text>
</comment>
<comment type="subcellular location">
    <subcellularLocation>
        <location evidence="4">Cytoplasm</location>
        <location evidence="4">Cytoskeleton</location>
        <location evidence="4">Spindle</location>
    </subcellularLocation>
    <text evidence="5">Localizes to the microtubules throughout mitosis.</text>
</comment>
<comment type="alternative products">
    <event type="alternative splicing"/>
    <isoform>
        <id>Q8IWC1-1</id>
        <name>1</name>
        <sequence type="displayed"/>
    </isoform>
    <isoform>
        <id>Q8IWC1-2</id>
        <name>2</name>
        <sequence type="described" ref="VSP_028499"/>
    </isoform>
    <isoform>
        <id>Q8IWC1-3</id>
        <name>3</name>
        <sequence type="described" ref="VSP_028498"/>
    </isoform>
    <isoform>
        <id>Q8IWC1-4</id>
        <name>4</name>
        <sequence type="described" ref="VSP_045008"/>
    </isoform>
</comment>
<comment type="induction">
    <text evidence="5">Expression is cell cycle dependent with the highest levels during G1, S, and M phases, and low level in G2 phase.</text>
</comment>
<comment type="similarity">
    <text evidence="12">Belongs to the MAP7 family.</text>
</comment>
<comment type="sequence caution" evidence="12">
    <conflict type="miscellaneous discrepancy">
        <sequence resource="EMBL-CDS" id="AAH64350"/>
    </conflict>
    <text>Contaminating sequence. Potential poly-A sequence.</text>
</comment>
<sequence length="876" mass="98429">MMADGAAAGAGGSPSLRELRARMVAAANEIAKERRKQDVVNRVATHSSNIRSTFKPVIDGSMLKNDIKQRLARERREEKRRQQDANKETQLLEKERKTKLQYEKQMEERQRKLKERKEKEEQRRIAAEEKRHQKDEAQKEKFTAILYRTLERRRLADDYQQKRWSWGGSAMANSESKTANKRSASTEKLEQGTSALIRQMPLSSAGLQNSVAKRKTDKERSSSLNRRDSNLHSSTDKEQAERKPRVTGVTNYVMQYVTVPLRKCTSDELRAVMFPMSTMKIPPQTKVEESPLEKVETPPKASVDAPPQVNVEVFCNTSMEASPKAGVGMAPEVSTDSFPVVSVDVSPVVSTYDSEMSMDASPELSIEALPKVDLETVPKVSIVASPEASLEAPPEVSLEALPEVSVEAAPEGSLEAPPKGSAEVAPKESVKGSPKESMEASPEAMVKASPKTSLEASMEASPKAKARDAPKKSEMDKQALIPIAKKRLSSYTECYKWSSSPENACGLPSPISTNRQIQKNCPPSPLPLISKQSPQTSFPYKIMPIQHTLSVQSASSTVKKKKETVSKTTNRCEALSQRHMIYEESGNKSTAGIMNAEAATKILTELRRLAREQREKEEEERQREEMQQRVIKKSKDMAKEAVGGQAEDHLKLKDGQQQNETKKKKGWLDQEDQEAPLQKGDAKIKAQEEADKRKKEHERIMLQNLQERLERKKRIEEIMKRTRKTDVNASKVTETSSHDIYEEAEADNEESDKDSLNEMFPSAILNGTGSPTKFKMPFNNAKKMTHKLVFLEDGTSQVRKEPKTYFNGDLKNFRQKSMKDTSIQEVVSRPSSKRMTSHTTKTRKADETNTTSRSSAQTKSEGFHDILPKSSDTFRQ</sequence>
<gene>
    <name type="primary">MAP7D3</name>
    <name evidence="11" type="synonym">MDP3</name>
</gene>